<gene>
    <name type="primary">mog-2</name>
    <name type="synonym">sap-1</name>
    <name type="ORF">H20J04.8</name>
</gene>
<organism>
    <name type="scientific">Caenorhabditis elegans</name>
    <dbReference type="NCBI Taxonomy" id="6239"/>
    <lineage>
        <taxon>Eukaryota</taxon>
        <taxon>Metazoa</taxon>
        <taxon>Ecdysozoa</taxon>
        <taxon>Nematoda</taxon>
        <taxon>Chromadorea</taxon>
        <taxon>Rhabditida</taxon>
        <taxon>Rhabditina</taxon>
        <taxon>Rhabditomorpha</taxon>
        <taxon>Rhabditoidea</taxon>
        <taxon>Rhabditidae</taxon>
        <taxon>Peloderinae</taxon>
        <taxon>Caenorhabditis</taxon>
    </lineage>
</organism>
<feature type="chain" id="PRO_0000074176" description="Probable U2 small nuclear ribonucleoprotein A'">
    <location>
        <begin position="1"/>
        <end position="253"/>
    </location>
</feature>
<feature type="repeat" description="LRR 1">
    <location>
        <begin position="20"/>
        <end position="41"/>
    </location>
</feature>
<feature type="repeat" description="LRR 2">
    <location>
        <begin position="43"/>
        <end position="64"/>
    </location>
</feature>
<feature type="repeat" description="LRR 3">
    <location>
        <begin position="65"/>
        <end position="86"/>
    </location>
</feature>
<feature type="repeat" description="LRR 4">
    <location>
        <begin position="89"/>
        <end position="110"/>
    </location>
</feature>
<feature type="domain" description="LRRCT">
    <location>
        <begin position="123"/>
        <end position="161"/>
    </location>
</feature>
<feature type="region of interest" description="Disordered" evidence="1">
    <location>
        <begin position="163"/>
        <end position="205"/>
    </location>
</feature>
<feature type="region of interest" description="Disordered" evidence="1">
    <location>
        <begin position="232"/>
        <end position="253"/>
    </location>
</feature>
<feature type="compositionally biased region" description="Basic and acidic residues" evidence="1">
    <location>
        <begin position="169"/>
        <end position="182"/>
    </location>
</feature>
<keyword id="KW-0002">3D-structure</keyword>
<keyword id="KW-0433">Leucine-rich repeat</keyword>
<keyword id="KW-0539">Nucleus</keyword>
<keyword id="KW-1185">Reference proteome</keyword>
<keyword id="KW-0677">Repeat</keyword>
<keyword id="KW-0687">Ribonucleoprotein</keyword>
<keyword id="KW-0694">RNA-binding</keyword>
<reference key="1">
    <citation type="journal article" date="2011" name="Dev. Biol.">
        <title>Role of the C. elegans U2 snRNP protein MOG-2 in sex determination, meiosis, and splice site selection.</title>
        <authorList>
            <person name="Zanetti S."/>
            <person name="Meola M."/>
            <person name="Bochud A."/>
            <person name="Puoti A."/>
        </authorList>
    </citation>
    <scope>NUCLEOTIDE SEQUENCE [MRNA]</scope>
    <scope>FUNCTION</scope>
    <scope>INTERACTION WITH RNP-3</scope>
    <scope>SUBCELLULAR LOCATION</scope>
    <scope>DISRUPTION PHENOTYPE</scope>
</reference>
<reference key="2">
    <citation type="journal article" date="1998" name="Science">
        <title>Genome sequence of the nematode C. elegans: a platform for investigating biology.</title>
        <authorList>
            <consortium name="The C. elegans sequencing consortium"/>
        </authorList>
    </citation>
    <scope>NUCLEOTIDE SEQUENCE [LARGE SCALE GENOMIC DNA]</scope>
    <source>
        <strain>Bristol N2</strain>
    </source>
</reference>
<evidence type="ECO:0000256" key="1">
    <source>
        <dbReference type="SAM" id="MobiDB-lite"/>
    </source>
</evidence>
<evidence type="ECO:0000269" key="2">
    <source>
    </source>
</evidence>
<evidence type="ECO:0000305" key="3"/>
<comment type="function">
    <text evidence="2">This protein is associated with sn-RNP U2. It helps the A' protein to bind stem loop IV of U2 snRNA. Required maternally for early embryonic development and zygotically for germline and somatic development. Has a role in the switch from mitosis to meiosis. Might function in alternative splicing.</text>
</comment>
<comment type="subunit">
    <text evidence="2">Interacts with rnp-3.</text>
</comment>
<comment type="interaction">
    <interactant intactId="EBI-3890918">
        <id>Q9BLB6</id>
    </interactant>
    <interactant intactId="EBI-3890921">
        <id>Q21323</id>
        <label>rnp-3</label>
    </interactant>
    <organismsDiffer>false</organismsDiffer>
    <experiments>3</experiments>
</comment>
<comment type="subcellular location">
    <subcellularLocation>
        <location evidence="2">Nucleus</location>
    </subcellularLocation>
    <text>Expressed in the transition zone and pachytene region of mitotic nuclei.</text>
</comment>
<comment type="disruption phenotype">
    <text evidence="2">Reduced rate of growth. Embryonic lethal. Mog-2 and rnp-3 double mutants show arrested larval development at L2, without showing signs of oogenesis or spermatogenesis and increased rates of embryonic lethality.</text>
</comment>
<comment type="similarity">
    <text evidence="3">Belongs to the U2 small nuclear ribonucleoprotein A family.</text>
</comment>
<sequence length="253" mass="28865">MVRLTTELFAERPQFVNSVNMREINLRGQKIPVIENMGVTRDQFDVIDLTDNDIRKLDNFPTFSRLNTLYLHNNRINYIAPDIATKLPNLKTLALTNNNICELGDIEPLAECKKLEYVTFIGNPITHKDNYRMYMIYKLPTVRVIDFNRVRLTEREAAKKMFKGKSGKKARDAIQKSVHTEDPSEIEPNENSSGGGARLTDEDREKIKEAIKNAKSLSEVNYLQSILASGKVPEKGWNRQMDQNGADGEAMES</sequence>
<dbReference type="EMBL" id="HM852593">
    <property type="protein sequence ID" value="ADL39791.1"/>
    <property type="molecule type" value="mRNA"/>
</dbReference>
<dbReference type="EMBL" id="FO080156">
    <property type="protein sequence ID" value="CCD61684.1"/>
    <property type="molecule type" value="Genomic_DNA"/>
</dbReference>
<dbReference type="RefSeq" id="NP_494763.1">
    <property type="nucleotide sequence ID" value="NM_062362.6"/>
</dbReference>
<dbReference type="PDB" id="8RO0">
    <property type="method" value="EM"/>
    <property type="resolution" value="2.90 A"/>
    <property type="chains" value="o=1-253"/>
</dbReference>
<dbReference type="PDB" id="8RO1">
    <property type="method" value="EM"/>
    <property type="resolution" value="3.00 A"/>
    <property type="chains" value="o=1-253"/>
</dbReference>
<dbReference type="PDBsum" id="8RO0"/>
<dbReference type="PDBsum" id="8RO1"/>
<dbReference type="EMDB" id="EMD-19397"/>
<dbReference type="EMDB" id="EMD-19398"/>
<dbReference type="SMR" id="Q9BLB6"/>
<dbReference type="BioGRID" id="39123">
    <property type="interactions" value="11"/>
</dbReference>
<dbReference type="FunCoup" id="Q9BLB6">
    <property type="interactions" value="3123"/>
</dbReference>
<dbReference type="IntAct" id="Q9BLB6">
    <property type="interactions" value="2"/>
</dbReference>
<dbReference type="STRING" id="6239.H20J04.8.2"/>
<dbReference type="PaxDb" id="6239-H20J04.8"/>
<dbReference type="PeptideAtlas" id="Q9BLB6"/>
<dbReference type="EnsemblMetazoa" id="H20J04.8.1">
    <property type="protein sequence ID" value="H20J04.8.1"/>
    <property type="gene ID" value="WBGene00003390"/>
</dbReference>
<dbReference type="GeneID" id="173767"/>
<dbReference type="KEGG" id="cel:CELE_H20J04.8"/>
<dbReference type="UCSC" id="H20J04.8.1">
    <property type="organism name" value="c. elegans"/>
</dbReference>
<dbReference type="AGR" id="WB:WBGene00003390"/>
<dbReference type="CTD" id="173767"/>
<dbReference type="WormBase" id="H20J04.8">
    <property type="protein sequence ID" value="CE20974"/>
    <property type="gene ID" value="WBGene00003390"/>
    <property type="gene designation" value="mog-2"/>
</dbReference>
<dbReference type="eggNOG" id="KOG1644">
    <property type="taxonomic scope" value="Eukaryota"/>
</dbReference>
<dbReference type="GeneTree" id="ENSGT00940000153289"/>
<dbReference type="HOGENOM" id="CLU_061027_1_0_1"/>
<dbReference type="InParanoid" id="Q9BLB6"/>
<dbReference type="OMA" id="PNYREYM"/>
<dbReference type="OrthoDB" id="433501at2759"/>
<dbReference type="PhylomeDB" id="Q9BLB6"/>
<dbReference type="Reactome" id="R-CEL-72163">
    <property type="pathway name" value="mRNA Splicing - Major Pathway"/>
</dbReference>
<dbReference type="PRO" id="PR:Q9BLB6"/>
<dbReference type="Proteomes" id="UP000001940">
    <property type="component" value="Chromosome II"/>
</dbReference>
<dbReference type="Bgee" id="WBGene00003390">
    <property type="expression patterns" value="Expressed in embryo and 4 other cell types or tissues"/>
</dbReference>
<dbReference type="GO" id="GO:0005654">
    <property type="term" value="C:nucleoplasm"/>
    <property type="evidence" value="ECO:0000314"/>
    <property type="project" value="WormBase"/>
</dbReference>
<dbReference type="GO" id="GO:0005634">
    <property type="term" value="C:nucleus"/>
    <property type="evidence" value="ECO:0000314"/>
    <property type="project" value="WormBase"/>
</dbReference>
<dbReference type="GO" id="GO:0005686">
    <property type="term" value="C:U2 snRNP"/>
    <property type="evidence" value="ECO:0000314"/>
    <property type="project" value="WormBase"/>
</dbReference>
<dbReference type="GO" id="GO:0030620">
    <property type="term" value="F:U2 snRNA binding"/>
    <property type="evidence" value="ECO:0000314"/>
    <property type="project" value="WormBase"/>
</dbReference>
<dbReference type="GO" id="GO:0040022">
    <property type="term" value="P:feminization of hermaphroditic germ-line"/>
    <property type="evidence" value="ECO:0000315"/>
    <property type="project" value="WormBase"/>
</dbReference>
<dbReference type="GO" id="GO:0051729">
    <property type="term" value="P:germline cell cycle switching, mitotic to meiotic cell cycle"/>
    <property type="evidence" value="ECO:0000316"/>
    <property type="project" value="WormBase"/>
</dbReference>
<dbReference type="GO" id="GO:0000389">
    <property type="term" value="P:mRNA 3'-splice site recognition"/>
    <property type="evidence" value="ECO:0000315"/>
    <property type="project" value="WormBase"/>
</dbReference>
<dbReference type="GO" id="GO:0000398">
    <property type="term" value="P:mRNA splicing, via spliceosome"/>
    <property type="evidence" value="ECO:0000314"/>
    <property type="project" value="WormBase"/>
</dbReference>
<dbReference type="FunFam" id="3.80.10.10:FF:000026">
    <property type="entry name" value="U2 small nuclear ribonucleoprotein A"/>
    <property type="match status" value="1"/>
</dbReference>
<dbReference type="Gene3D" id="3.80.10.10">
    <property type="entry name" value="Ribonuclease Inhibitor"/>
    <property type="match status" value="1"/>
</dbReference>
<dbReference type="InterPro" id="IPR001611">
    <property type="entry name" value="Leu-rich_rpt"/>
</dbReference>
<dbReference type="InterPro" id="IPR032675">
    <property type="entry name" value="LRR_dom_sf"/>
</dbReference>
<dbReference type="InterPro" id="IPR044640">
    <property type="entry name" value="RU2A"/>
</dbReference>
<dbReference type="PANTHER" id="PTHR10552">
    <property type="entry name" value="U2 SMALL NUCLEAR RIBONUCLEOPROTEIN A"/>
    <property type="match status" value="1"/>
</dbReference>
<dbReference type="PANTHER" id="PTHR10552:SF6">
    <property type="entry name" value="U2 SMALL NUCLEAR RIBONUCLEOPROTEIN A"/>
    <property type="match status" value="1"/>
</dbReference>
<dbReference type="Pfam" id="PF14580">
    <property type="entry name" value="LRR_9"/>
    <property type="match status" value="1"/>
</dbReference>
<dbReference type="SUPFAM" id="SSF52058">
    <property type="entry name" value="L domain-like"/>
    <property type="match status" value="1"/>
</dbReference>
<dbReference type="PROSITE" id="PS51450">
    <property type="entry name" value="LRR"/>
    <property type="match status" value="3"/>
</dbReference>
<protein>
    <recommendedName>
        <fullName>Probable U2 small nuclear ribonucleoprotein A'</fullName>
        <shortName>U2 snRNP A'</shortName>
    </recommendedName>
    <alternativeName>
        <fullName>Masculinization of germline protein 2</fullName>
    </alternativeName>
    <alternativeName>
        <fullName>Spliceosome-associated protein mog-2</fullName>
    </alternativeName>
</protein>
<name>RU2A_CAEEL</name>
<accession>Q9BLB6</accession>
<accession>E0AFQ0</accession>
<proteinExistence type="evidence at protein level"/>